<proteinExistence type="inferred from homology"/>
<reference key="1">
    <citation type="journal article" date="2005" name="Proc. Natl. Acad. Sci. U.S.A.">
        <title>The complete genome sequence of Mycobacterium avium subspecies paratuberculosis.</title>
        <authorList>
            <person name="Li L."/>
            <person name="Bannantine J.P."/>
            <person name="Zhang Q."/>
            <person name="Amonsin A."/>
            <person name="May B.J."/>
            <person name="Alt D."/>
            <person name="Banerji N."/>
            <person name="Kanjilal S."/>
            <person name="Kapur V."/>
        </authorList>
    </citation>
    <scope>NUCLEOTIDE SEQUENCE [LARGE SCALE GENOMIC DNA]</scope>
    <source>
        <strain>ATCC BAA-968 / K-10</strain>
    </source>
</reference>
<keyword id="KW-1185">Reference proteome</keyword>
<keyword id="KW-0687">Ribonucleoprotein</keyword>
<keyword id="KW-0689">Ribosomal protein</keyword>
<keyword id="KW-0694">RNA-binding</keyword>
<keyword id="KW-0699">rRNA-binding</keyword>
<dbReference type="EMBL" id="AE016958">
    <property type="protein sequence ID" value="AAS05209.1"/>
    <property type="molecule type" value="Genomic_DNA"/>
</dbReference>
<dbReference type="RefSeq" id="WP_003878661.1">
    <property type="nucleotide sequence ID" value="NZ_CP106873.1"/>
</dbReference>
<dbReference type="SMR" id="Q73VW9"/>
<dbReference type="STRING" id="262316.MAP_2892c"/>
<dbReference type="GeneID" id="77301003"/>
<dbReference type="KEGG" id="mpa:MAP_2892c"/>
<dbReference type="eggNOG" id="COG0184">
    <property type="taxonomic scope" value="Bacteria"/>
</dbReference>
<dbReference type="HOGENOM" id="CLU_148518_0_0_11"/>
<dbReference type="Proteomes" id="UP000000580">
    <property type="component" value="Chromosome"/>
</dbReference>
<dbReference type="GO" id="GO:0022627">
    <property type="term" value="C:cytosolic small ribosomal subunit"/>
    <property type="evidence" value="ECO:0007669"/>
    <property type="project" value="TreeGrafter"/>
</dbReference>
<dbReference type="GO" id="GO:0019843">
    <property type="term" value="F:rRNA binding"/>
    <property type="evidence" value="ECO:0007669"/>
    <property type="project" value="UniProtKB-UniRule"/>
</dbReference>
<dbReference type="GO" id="GO:0003735">
    <property type="term" value="F:structural constituent of ribosome"/>
    <property type="evidence" value="ECO:0007669"/>
    <property type="project" value="InterPro"/>
</dbReference>
<dbReference type="GO" id="GO:0006412">
    <property type="term" value="P:translation"/>
    <property type="evidence" value="ECO:0007669"/>
    <property type="project" value="UniProtKB-UniRule"/>
</dbReference>
<dbReference type="CDD" id="cd00353">
    <property type="entry name" value="Ribosomal_S15p_S13e"/>
    <property type="match status" value="1"/>
</dbReference>
<dbReference type="FunFam" id="1.10.287.10:FF:000002">
    <property type="entry name" value="30S ribosomal protein S15"/>
    <property type="match status" value="1"/>
</dbReference>
<dbReference type="Gene3D" id="6.10.250.3130">
    <property type="match status" value="1"/>
</dbReference>
<dbReference type="Gene3D" id="1.10.287.10">
    <property type="entry name" value="S15/NS1, RNA-binding"/>
    <property type="match status" value="1"/>
</dbReference>
<dbReference type="HAMAP" id="MF_01343_B">
    <property type="entry name" value="Ribosomal_uS15_B"/>
    <property type="match status" value="1"/>
</dbReference>
<dbReference type="InterPro" id="IPR000589">
    <property type="entry name" value="Ribosomal_uS15"/>
</dbReference>
<dbReference type="InterPro" id="IPR005290">
    <property type="entry name" value="Ribosomal_uS15_bac-type"/>
</dbReference>
<dbReference type="InterPro" id="IPR009068">
    <property type="entry name" value="uS15_NS1_RNA-bd_sf"/>
</dbReference>
<dbReference type="NCBIfam" id="TIGR00952">
    <property type="entry name" value="S15_bact"/>
    <property type="match status" value="1"/>
</dbReference>
<dbReference type="PANTHER" id="PTHR23321">
    <property type="entry name" value="RIBOSOMAL PROTEIN S15, BACTERIAL AND ORGANELLAR"/>
    <property type="match status" value="1"/>
</dbReference>
<dbReference type="PANTHER" id="PTHR23321:SF26">
    <property type="entry name" value="SMALL RIBOSOMAL SUBUNIT PROTEIN US15M"/>
    <property type="match status" value="1"/>
</dbReference>
<dbReference type="Pfam" id="PF00312">
    <property type="entry name" value="Ribosomal_S15"/>
    <property type="match status" value="1"/>
</dbReference>
<dbReference type="SMART" id="SM01387">
    <property type="entry name" value="Ribosomal_S15"/>
    <property type="match status" value="1"/>
</dbReference>
<dbReference type="SUPFAM" id="SSF47060">
    <property type="entry name" value="S15/NS1 RNA-binding domain"/>
    <property type="match status" value="1"/>
</dbReference>
<dbReference type="PROSITE" id="PS00362">
    <property type="entry name" value="RIBOSOMAL_S15"/>
    <property type="match status" value="1"/>
</dbReference>
<protein>
    <recommendedName>
        <fullName evidence="1">Small ribosomal subunit protein uS15</fullName>
    </recommendedName>
    <alternativeName>
        <fullName evidence="2">30S ribosomal protein S15</fullName>
    </alternativeName>
</protein>
<feature type="chain" id="PRO_0000115472" description="Small ribosomal subunit protein uS15">
    <location>
        <begin position="1"/>
        <end position="89"/>
    </location>
</feature>
<accession>Q73VW9</accession>
<evidence type="ECO:0000255" key="1">
    <source>
        <dbReference type="HAMAP-Rule" id="MF_01343"/>
    </source>
</evidence>
<evidence type="ECO:0000305" key="2"/>
<comment type="function">
    <text evidence="1">One of the primary rRNA binding proteins, it binds directly to 16S rRNA where it helps nucleate assembly of the platform of the 30S subunit by binding and bridging several RNA helices of the 16S rRNA.</text>
</comment>
<comment type="function">
    <text evidence="1">Forms an intersubunit bridge (bridge B4) with the 23S rRNA of the 50S subunit in the ribosome.</text>
</comment>
<comment type="subunit">
    <text evidence="1">Part of the 30S ribosomal subunit. Forms a bridge to the 50S subunit in the 70S ribosome, contacting the 23S rRNA.</text>
</comment>
<comment type="similarity">
    <text evidence="1">Belongs to the universal ribosomal protein uS15 family.</text>
</comment>
<name>RS15_MYCPA</name>
<gene>
    <name evidence="1" type="primary">rpsO</name>
    <name type="ordered locus">MAP_2892c</name>
</gene>
<organism>
    <name type="scientific">Mycolicibacterium paratuberculosis (strain ATCC BAA-968 / K-10)</name>
    <name type="common">Mycobacterium paratuberculosis</name>
    <dbReference type="NCBI Taxonomy" id="262316"/>
    <lineage>
        <taxon>Bacteria</taxon>
        <taxon>Bacillati</taxon>
        <taxon>Actinomycetota</taxon>
        <taxon>Actinomycetes</taxon>
        <taxon>Mycobacteriales</taxon>
        <taxon>Mycobacteriaceae</taxon>
        <taxon>Mycobacterium</taxon>
        <taxon>Mycobacterium avium complex (MAC)</taxon>
    </lineage>
</organism>
<sequence length="89" mass="10318">MALTAEQKKEILGTYGLHDTDTGSPEAQVALLTKRIADLTEHLKVHKHDHHSRRGLLLLVGRRRRLLKYVAQIDVERYRSLVERLGLRR</sequence>